<sequence>MQSIIGKHKDEGKITPEYLKKIDAYWRAANFISVGQLYLLDNPLLREPLKPEHLKRKVVGHWGTIPGQNFIYAHLNRVIKKYDLDMIYVSGPGHGGQVMVSNSYLDGTYSEVYPNVSRDLNGLKKLCKQFSFPGGISSHMAPETPGSINEGGELGYSLAHSFGAVFDNPDLITACVVGDGEAETGPLATSWQANKFLNPVTDGAVLPILHLNGYKISNPTVLSRIPKDELEKFFEGNGWKPYFVEGEDPETMHKLMAETLDIVTEEILNIQKNARENNDCSRPKWPMIVLRTPKGWTGPKFVDGVPNEGSFRAHQVPLAVDRYHTENLDQLEEWLKSYKPEELFDENYRLIPELEELTPKGNKRMAANLHANGGLLLRELRTPDFRDYAVDVPTPGSTVKQDMIELGKYVRDVVKLNEDTRNFRIFGPDETMSNRLWAVFEGTKRQWLSEIKEPNDEFLSNDGRIVDSMLSEHLCEGWLEGYLLTGRHGFFASYEAFLRIVDSMITQHGKWLKVTSQLPWRKDIASLNLIATSNVWQQDHNGYTHQDPGLLGHIVDKKPEIVRAYLPADANTLLAVFDKCLHTKHKINLLVTSKHPRQQWLTMDQAVKHVEQGISIWDWASNDKGQEPDVVIASCGDTPTLEALAAVTILHEHLPELKVRFVNVVDMMKLLPENEHPHGLSDKDYNALFTTDKPVIFAFHGFAHLINQLTYHRENRNLHVHGYMEEGTITTPFDMRVQNKLDRFNLVKDVVENLPQLGNRGAHLVQLMNDKLVEHNQYIREVGEDLPEITNWQWHV</sequence>
<feature type="chain" id="PRO_0000193875" description="Probable phosphoketolase">
    <location>
        <begin position="1"/>
        <end position="796"/>
    </location>
</feature>
<evidence type="ECO:0000305" key="1"/>
<name>PHK_CLOAB</name>
<protein>
    <recommendedName>
        <fullName>Probable phosphoketolase</fullName>
        <ecNumber>4.1.2.-</ecNumber>
    </recommendedName>
</protein>
<comment type="cofactor">
    <cofactor evidence="1">
        <name>thiamine diphosphate</name>
        <dbReference type="ChEBI" id="CHEBI:58937"/>
    </cofactor>
</comment>
<comment type="similarity">
    <text evidence="1">Belongs to the XFP family.</text>
</comment>
<organism>
    <name type="scientific">Clostridium acetobutylicum (strain ATCC 824 / DSM 792 / JCM 1419 / IAM 19013 / LMG 5710 / NBRC 13948 / NRRL B-527 / VKM B-1787 / 2291 / W)</name>
    <dbReference type="NCBI Taxonomy" id="272562"/>
    <lineage>
        <taxon>Bacteria</taxon>
        <taxon>Bacillati</taxon>
        <taxon>Bacillota</taxon>
        <taxon>Clostridia</taxon>
        <taxon>Eubacteriales</taxon>
        <taxon>Clostridiaceae</taxon>
        <taxon>Clostridium</taxon>
    </lineage>
</organism>
<reference key="1">
    <citation type="journal article" date="2001" name="J. Bacteriol.">
        <title>Genome sequence and comparative analysis of the solvent-producing bacterium Clostridium acetobutylicum.</title>
        <authorList>
            <person name="Noelling J."/>
            <person name="Breton G."/>
            <person name="Omelchenko M.V."/>
            <person name="Makarova K.S."/>
            <person name="Zeng Q."/>
            <person name="Gibson R."/>
            <person name="Lee H.M."/>
            <person name="Dubois J."/>
            <person name="Qiu D."/>
            <person name="Hitti J."/>
            <person name="Wolf Y.I."/>
            <person name="Tatusov R.L."/>
            <person name="Sabathe F."/>
            <person name="Doucette-Stamm L.A."/>
            <person name="Soucaille P."/>
            <person name="Daly M.J."/>
            <person name="Bennett G.N."/>
            <person name="Koonin E.V."/>
            <person name="Smith D.R."/>
        </authorList>
    </citation>
    <scope>NUCLEOTIDE SEQUENCE [LARGE SCALE GENOMIC DNA]</scope>
    <source>
        <strain>ATCC 824 / DSM 792 / JCM 1419 / IAM 19013 / LMG 5710 / NBRC 13948 / NRRL B-527 / VKM B-1787 / 2291 / W</strain>
    </source>
</reference>
<accession>Q97JE3</accession>
<dbReference type="EC" id="4.1.2.-"/>
<dbReference type="EMBL" id="AE001437">
    <property type="protein sequence ID" value="AAK79311.1"/>
    <property type="molecule type" value="Genomic_DNA"/>
</dbReference>
<dbReference type="PIR" id="D97065">
    <property type="entry name" value="D97065"/>
</dbReference>
<dbReference type="RefSeq" id="NP_347971.1">
    <property type="nucleotide sequence ID" value="NC_003030.1"/>
</dbReference>
<dbReference type="RefSeq" id="WP_010964652.1">
    <property type="nucleotide sequence ID" value="NC_003030.1"/>
</dbReference>
<dbReference type="SMR" id="Q97JE3"/>
<dbReference type="STRING" id="272562.CA_C1343"/>
<dbReference type="KEGG" id="cac:CA_C1343"/>
<dbReference type="PATRIC" id="fig|272562.8.peg.1548"/>
<dbReference type="eggNOG" id="COG3957">
    <property type="taxonomic scope" value="Bacteria"/>
</dbReference>
<dbReference type="HOGENOM" id="CLU_013954_2_0_9"/>
<dbReference type="OrthoDB" id="9768449at2"/>
<dbReference type="BRENDA" id="4.1.2.9">
    <property type="organism ID" value="1452"/>
</dbReference>
<dbReference type="Proteomes" id="UP000000814">
    <property type="component" value="Chromosome"/>
</dbReference>
<dbReference type="GO" id="GO:0016832">
    <property type="term" value="F:aldehyde-lyase activity"/>
    <property type="evidence" value="ECO:0007669"/>
    <property type="project" value="UniProtKB-UniRule"/>
</dbReference>
<dbReference type="GO" id="GO:0005975">
    <property type="term" value="P:carbohydrate metabolic process"/>
    <property type="evidence" value="ECO:0007669"/>
    <property type="project" value="InterPro"/>
</dbReference>
<dbReference type="CDD" id="cd02011">
    <property type="entry name" value="TPP_PK"/>
    <property type="match status" value="1"/>
</dbReference>
<dbReference type="Gene3D" id="3.40.50.920">
    <property type="match status" value="1"/>
</dbReference>
<dbReference type="Gene3D" id="3.40.50.970">
    <property type="match status" value="2"/>
</dbReference>
<dbReference type="HAMAP" id="MF_01403">
    <property type="entry name" value="Phosphoketolase"/>
    <property type="match status" value="1"/>
</dbReference>
<dbReference type="InterPro" id="IPR023962">
    <property type="entry name" value="Phosphoketolase"/>
</dbReference>
<dbReference type="InterPro" id="IPR029061">
    <property type="entry name" value="THDP-binding"/>
</dbReference>
<dbReference type="InterPro" id="IPR009014">
    <property type="entry name" value="Transketo_C/PFOR_II"/>
</dbReference>
<dbReference type="InterPro" id="IPR005593">
    <property type="entry name" value="Xul5P/Fru6P_PKetolase"/>
</dbReference>
<dbReference type="InterPro" id="IPR018969">
    <property type="entry name" value="Xul5P/Fru6P_PKetolase_C"/>
</dbReference>
<dbReference type="InterPro" id="IPR019790">
    <property type="entry name" value="Xul5P/Fru6P_PKetolase_CS"/>
</dbReference>
<dbReference type="InterPro" id="IPR018970">
    <property type="entry name" value="Xul5P/Fru6P_PKetolase_N"/>
</dbReference>
<dbReference type="InterPro" id="IPR019789">
    <property type="entry name" value="Xul5P/Fru6P_PKetolase_ThDP_BS"/>
</dbReference>
<dbReference type="NCBIfam" id="NF003617">
    <property type="entry name" value="PRK05261.1-2"/>
    <property type="match status" value="1"/>
</dbReference>
<dbReference type="NCBIfam" id="NF003618">
    <property type="entry name" value="PRK05261.1-3"/>
    <property type="match status" value="1"/>
</dbReference>
<dbReference type="NCBIfam" id="NF003619">
    <property type="entry name" value="PRK05261.1-4"/>
    <property type="match status" value="1"/>
</dbReference>
<dbReference type="PANTHER" id="PTHR31273">
    <property type="entry name" value="PHOSPHOKETOLASE-RELATED"/>
    <property type="match status" value="1"/>
</dbReference>
<dbReference type="PANTHER" id="PTHR31273:SF0">
    <property type="entry name" value="PHOSPHOKETOLASE-RELATED"/>
    <property type="match status" value="1"/>
</dbReference>
<dbReference type="Pfam" id="PF03894">
    <property type="entry name" value="XFP"/>
    <property type="match status" value="1"/>
</dbReference>
<dbReference type="Pfam" id="PF09363">
    <property type="entry name" value="XFP_C"/>
    <property type="match status" value="1"/>
</dbReference>
<dbReference type="Pfam" id="PF09364">
    <property type="entry name" value="XFP_N"/>
    <property type="match status" value="1"/>
</dbReference>
<dbReference type="PIRSF" id="PIRSF017245">
    <property type="entry name" value="Phosphoketolase"/>
    <property type="match status" value="1"/>
</dbReference>
<dbReference type="SUPFAM" id="SSF52518">
    <property type="entry name" value="Thiamin diphosphate-binding fold (THDP-binding)"/>
    <property type="match status" value="2"/>
</dbReference>
<dbReference type="PROSITE" id="PS60002">
    <property type="entry name" value="PHOSPHOKETOLASE_1"/>
    <property type="match status" value="1"/>
</dbReference>
<dbReference type="PROSITE" id="PS60003">
    <property type="entry name" value="PHOSPHOKETOLASE_2"/>
    <property type="match status" value="1"/>
</dbReference>
<gene>
    <name type="ordered locus">CA_C1343</name>
</gene>
<proteinExistence type="inferred from homology"/>
<keyword id="KW-0456">Lyase</keyword>
<keyword id="KW-1185">Reference proteome</keyword>
<keyword id="KW-0786">Thiamine pyrophosphate</keyword>